<comment type="function">
    <text>Promotes cell fusion during zygote formation.</text>
</comment>
<comment type="subcellular location">
    <subcellularLocation>
        <location>Cell tip</location>
    </subcellularLocation>
    <text>Localizes at the mating projection tip (shmoo).</text>
</comment>
<protein>
    <recommendedName>
        <fullName>Nuclear fusion protein FUS2</fullName>
    </recommendedName>
</protein>
<dbReference type="EMBL" id="X90752">
    <property type="protein sequence ID" value="CAA62275.1"/>
    <property type="molecule type" value="Genomic_DNA"/>
</dbReference>
<dbReference type="EMBL" id="Z49939">
    <property type="protein sequence ID" value="CAA90203.1"/>
    <property type="molecule type" value="Genomic_DNA"/>
</dbReference>
<dbReference type="EMBL" id="BK006946">
    <property type="protein sequence ID" value="DAA10132.1"/>
    <property type="molecule type" value="Genomic_DNA"/>
</dbReference>
<dbReference type="PIR" id="S57599">
    <property type="entry name" value="S57599"/>
</dbReference>
<dbReference type="RefSeq" id="NP_013959.1">
    <property type="nucleotide sequence ID" value="NM_001182739.1"/>
</dbReference>
<dbReference type="BioGRID" id="35410">
    <property type="interactions" value="91"/>
</dbReference>
<dbReference type="DIP" id="DIP-2711N"/>
<dbReference type="FunCoup" id="Q05670">
    <property type="interactions" value="135"/>
</dbReference>
<dbReference type="IntAct" id="Q05670">
    <property type="interactions" value="21"/>
</dbReference>
<dbReference type="MINT" id="Q05670"/>
<dbReference type="STRING" id="4932.YMR232W"/>
<dbReference type="iPTMnet" id="Q05670"/>
<dbReference type="PaxDb" id="4932-YMR232W"/>
<dbReference type="PeptideAtlas" id="Q05670"/>
<dbReference type="EnsemblFungi" id="YMR232W_mRNA">
    <property type="protein sequence ID" value="YMR232W"/>
    <property type="gene ID" value="YMR232W"/>
</dbReference>
<dbReference type="GeneID" id="855272"/>
<dbReference type="KEGG" id="sce:YMR232W"/>
<dbReference type="AGR" id="SGD:S000004845"/>
<dbReference type="SGD" id="S000004845">
    <property type="gene designation" value="FUS2"/>
</dbReference>
<dbReference type="VEuPathDB" id="FungiDB:YMR232W"/>
<dbReference type="eggNOG" id="ENOG502RC15">
    <property type="taxonomic scope" value="Eukaryota"/>
</dbReference>
<dbReference type="HOGENOM" id="CLU_392821_0_0_1"/>
<dbReference type="InParanoid" id="Q05670"/>
<dbReference type="OMA" id="YKNDYFH"/>
<dbReference type="OrthoDB" id="10256089at2759"/>
<dbReference type="BioCyc" id="YEAST:G3O-32913-MONOMER"/>
<dbReference type="Reactome" id="R-SCE-416482">
    <property type="pathway name" value="G alpha (12/13) signalling events"/>
</dbReference>
<dbReference type="Reactome" id="R-SCE-9013148">
    <property type="pathway name" value="CDC42 GTPase cycle"/>
</dbReference>
<dbReference type="BioGRID-ORCS" id="855272">
    <property type="hits" value="0 hits in 10 CRISPR screens"/>
</dbReference>
<dbReference type="PRO" id="PR:Q05670"/>
<dbReference type="Proteomes" id="UP000002311">
    <property type="component" value="Chromosome XIII"/>
</dbReference>
<dbReference type="RNAct" id="Q05670">
    <property type="molecule type" value="protein"/>
</dbReference>
<dbReference type="GO" id="GO:0005737">
    <property type="term" value="C:cytoplasm"/>
    <property type="evidence" value="ECO:0000314"/>
    <property type="project" value="SGD"/>
</dbReference>
<dbReference type="GO" id="GO:0043332">
    <property type="term" value="C:mating projection tip"/>
    <property type="evidence" value="ECO:0000314"/>
    <property type="project" value="SGD"/>
</dbReference>
<dbReference type="GO" id="GO:0005739">
    <property type="term" value="C:mitochondrion"/>
    <property type="evidence" value="ECO:0007005"/>
    <property type="project" value="SGD"/>
</dbReference>
<dbReference type="GO" id="GO:0005634">
    <property type="term" value="C:nucleus"/>
    <property type="evidence" value="ECO:0000314"/>
    <property type="project" value="SGD"/>
</dbReference>
<dbReference type="GO" id="GO:0005085">
    <property type="term" value="F:guanyl-nucleotide exchange factor activity"/>
    <property type="evidence" value="ECO:0000318"/>
    <property type="project" value="GO_Central"/>
</dbReference>
<dbReference type="GO" id="GO:0000747">
    <property type="term" value="P:conjugation with cellular fusion"/>
    <property type="evidence" value="ECO:0000315"/>
    <property type="project" value="SGD"/>
</dbReference>
<dbReference type="GO" id="GO:0000755">
    <property type="term" value="P:cytogamy"/>
    <property type="evidence" value="ECO:0000315"/>
    <property type="project" value="SGD"/>
</dbReference>
<dbReference type="GO" id="GO:0000742">
    <property type="term" value="P:karyogamy involved in conjugation with cellular fusion"/>
    <property type="evidence" value="ECO:0000315"/>
    <property type="project" value="SGD"/>
</dbReference>
<dbReference type="GO" id="GO:0031991">
    <property type="term" value="P:regulation of actomyosin contractile ring contraction"/>
    <property type="evidence" value="ECO:0000318"/>
    <property type="project" value="GO_Central"/>
</dbReference>
<dbReference type="GO" id="GO:0032955">
    <property type="term" value="P:regulation of division septum assembly"/>
    <property type="evidence" value="ECO:0000318"/>
    <property type="project" value="GO_Central"/>
</dbReference>
<dbReference type="FunFam" id="1.20.900.10:FF:000068">
    <property type="entry name" value="FUS2p Cell fusion regulator"/>
    <property type="match status" value="1"/>
</dbReference>
<dbReference type="Gene3D" id="1.20.1270.60">
    <property type="entry name" value="Arfaptin homology (AH) domain/BAR domain"/>
    <property type="match status" value="1"/>
</dbReference>
<dbReference type="Gene3D" id="1.20.900.10">
    <property type="entry name" value="Dbl homology (DH) domain"/>
    <property type="match status" value="1"/>
</dbReference>
<dbReference type="InterPro" id="IPR027267">
    <property type="entry name" value="AH/BAR_dom_sf"/>
</dbReference>
<dbReference type="InterPro" id="IPR035899">
    <property type="entry name" value="DBL_dom_sf"/>
</dbReference>
<dbReference type="InterPro" id="IPR000219">
    <property type="entry name" value="DH_dom"/>
</dbReference>
<dbReference type="InterPro" id="IPR051492">
    <property type="entry name" value="Dynamin-Rho_GEF"/>
</dbReference>
<dbReference type="PANTHER" id="PTHR22834">
    <property type="entry name" value="NUCLEAR FUSION PROTEIN FUS2"/>
    <property type="match status" value="1"/>
</dbReference>
<dbReference type="PANTHER" id="PTHR22834:SF20">
    <property type="entry name" value="SH3 DOMAIN-CONTAINING PROTEIN"/>
    <property type="match status" value="1"/>
</dbReference>
<dbReference type="SMART" id="SM00325">
    <property type="entry name" value="RhoGEF"/>
    <property type="match status" value="1"/>
</dbReference>
<dbReference type="SUPFAM" id="SSF48065">
    <property type="entry name" value="DBL homology domain (DH-domain)"/>
    <property type="match status" value="1"/>
</dbReference>
<dbReference type="PROSITE" id="PS50010">
    <property type="entry name" value="DH_2"/>
    <property type="match status" value="1"/>
</dbReference>
<keyword id="KW-0597">Phosphoprotein</keyword>
<keyword id="KW-1185">Reference proteome</keyword>
<accession>Q05670</accession>
<accession>D6W058</accession>
<accession>Q05023</accession>
<feature type="chain" id="PRO_0000080954" description="Nuclear fusion protein FUS2">
    <location>
        <begin position="1"/>
        <end position="677"/>
    </location>
</feature>
<feature type="domain" description="DH" evidence="1">
    <location>
        <begin position="112"/>
        <end position="326"/>
    </location>
</feature>
<feature type="modified residue" description="Phosphothreonine" evidence="3">
    <location>
        <position position="20"/>
    </location>
</feature>
<feature type="modified residue" description="Phosphoserine" evidence="3">
    <location>
        <position position="67"/>
    </location>
</feature>
<feature type="modified residue" description="Phosphoserine" evidence="3">
    <location>
        <position position="72"/>
    </location>
</feature>
<feature type="modified residue" description="Phosphoserine" evidence="3">
    <location>
        <position position="84"/>
    </location>
</feature>
<feature type="modified residue" description="Phosphothreonine" evidence="3">
    <location>
        <position position="88"/>
    </location>
</feature>
<feature type="modified residue" description="Phosphoserine" evidence="3">
    <location>
        <position position="100"/>
    </location>
</feature>
<feature type="modified residue" description="Phosphoserine" evidence="3">
    <location>
        <position position="106"/>
    </location>
</feature>
<feature type="sequence conflict" description="In Ref. 1; CAA62275." evidence="2" ref="1">
    <original>L</original>
    <variation>R</variation>
    <location>
        <position position="185"/>
    </location>
</feature>
<feature type="sequence conflict" description="In Ref. 1; CAA62275." evidence="2" ref="1">
    <original>F</original>
    <variation>L</variation>
    <location>
        <position position="203"/>
    </location>
</feature>
<feature type="sequence conflict" description="In Ref. 1; CAA62275." evidence="2" ref="1">
    <location>
        <begin position="543"/>
        <end position="546"/>
    </location>
</feature>
<feature type="sequence conflict" description="In Ref. 1; CAA62275." evidence="2" ref="1">
    <original>HDTIECILLNYIKVFLKYLEIIAGGKKYLQKDLENMSLNDSIATGQIKNLDILQCYSKSRYMTKRMVRKDWPFPGDPSGSRVVRKLFEL</original>
    <variation>PRYYRMYLVELYQSLLKIFGNHCWWKKIPAKRS</variation>
    <location>
        <begin position="589"/>
        <end position="677"/>
    </location>
</feature>
<organism>
    <name type="scientific">Saccharomyces cerevisiae (strain ATCC 204508 / S288c)</name>
    <name type="common">Baker's yeast</name>
    <dbReference type="NCBI Taxonomy" id="559292"/>
    <lineage>
        <taxon>Eukaryota</taxon>
        <taxon>Fungi</taxon>
        <taxon>Dikarya</taxon>
        <taxon>Ascomycota</taxon>
        <taxon>Saccharomycotina</taxon>
        <taxon>Saccharomycetes</taxon>
        <taxon>Saccharomycetales</taxon>
        <taxon>Saccharomycetaceae</taxon>
        <taxon>Saccharomyces</taxon>
    </lineage>
</organism>
<gene>
    <name type="primary">FUS2</name>
    <name type="ordered locus">YMR232W</name>
    <name type="ORF">YM9959.14</name>
</gene>
<evidence type="ECO:0000255" key="1">
    <source>
        <dbReference type="PROSITE-ProRule" id="PRU00062"/>
    </source>
</evidence>
<evidence type="ECO:0000305" key="2"/>
<evidence type="ECO:0007744" key="3">
    <source>
    </source>
</evidence>
<sequence length="677" mass="79037">MFKTSYNLYDLNYPKNDSLTPIRDYKNDYFHKNDDKLPEIVRKPTRKLSKHENKLNDKKFTNKRPASLDLHSIVESLSNKKIYSPINTEIFQNVVRLNLSPQIPNSPHEGCKFYKIVQEFYLSEVEYYNNLLTANNVYRKALNSDPRFKNKLVKLDSSDELLLFGNIDTIASISKILVTAIKDLLLAKQRGKMLDANEWQKIFTKNEVQQQLYSTFDISEAFEQHLLRIKSTYTSYFVSHQKQMELFTTLRMNKNHFFNKWYEYCLKESGCIKLEDILKSPMKRLTQWIDTLETLESCYEDILSPELGLKLSPTRRKYSLFSNKLETEVSEYKSNSMYNFSLTPSEIIQSYDEDQFTHLLKPPDKQNKNICNASRQESNLDNSRVPSLLSGSSSYYSDVSGLEIVTNTSTASAEMINLKMDEETEFFTLADHISKFKKVMKGLLELKKNLLKNDLSGIIDISLRRINAWKKVIECERPSGAFFAHDNLISTMCSSYIDKLHEQKNQVTILKLTELETDVMNPLERIIAHCTTVKSKLKDLQALKKDYMLFLQEKKANVRDIKRDLLGMHFQNLQNQMKRELPVFITLIHDTIECILLNYIKVFLKYLEIIAGGKKYLQKDLENMSLNDSIATGQIKNLDILQCYSKSRYMTKRMVRKDWPFPGDPSGSRVVRKLFEL</sequence>
<reference key="1">
    <citation type="journal article" date="1995" name="J. Cell Biol.">
        <title>Fus2 localizes near the site of cell fusion and is required for both cell fusion and nuclear alignment during zygote formation.</title>
        <authorList>
            <person name="Elion E.A."/>
            <person name="Trueheart J."/>
            <person name="Fink G.R."/>
        </authorList>
    </citation>
    <scope>NUCLEOTIDE SEQUENCE [GENOMIC DNA]</scope>
    <source>
        <strain>ATCC 204508 / S288c</strain>
    </source>
</reference>
<reference key="2">
    <citation type="journal article" date="1997" name="Nature">
        <title>The nucleotide sequence of Saccharomyces cerevisiae chromosome XIII.</title>
        <authorList>
            <person name="Bowman S."/>
            <person name="Churcher C.M."/>
            <person name="Badcock K."/>
            <person name="Brown D."/>
            <person name="Chillingworth T."/>
            <person name="Connor R."/>
            <person name="Dedman K."/>
            <person name="Devlin K."/>
            <person name="Gentles S."/>
            <person name="Hamlin N."/>
            <person name="Hunt S."/>
            <person name="Jagels K."/>
            <person name="Lye G."/>
            <person name="Moule S."/>
            <person name="Odell C."/>
            <person name="Pearson D."/>
            <person name="Rajandream M.A."/>
            <person name="Rice P."/>
            <person name="Skelton J."/>
            <person name="Walsh S.V."/>
            <person name="Whitehead S."/>
            <person name="Barrell B.G."/>
        </authorList>
    </citation>
    <scope>NUCLEOTIDE SEQUENCE [LARGE SCALE GENOMIC DNA]</scope>
    <source>
        <strain>ATCC 204508 / S288c</strain>
    </source>
</reference>
<reference key="3">
    <citation type="journal article" date="2014" name="G3 (Bethesda)">
        <title>The reference genome sequence of Saccharomyces cerevisiae: Then and now.</title>
        <authorList>
            <person name="Engel S.R."/>
            <person name="Dietrich F.S."/>
            <person name="Fisk D.G."/>
            <person name="Binkley G."/>
            <person name="Balakrishnan R."/>
            <person name="Costanzo M.C."/>
            <person name="Dwight S.S."/>
            <person name="Hitz B.C."/>
            <person name="Karra K."/>
            <person name="Nash R.S."/>
            <person name="Weng S."/>
            <person name="Wong E.D."/>
            <person name="Lloyd P."/>
            <person name="Skrzypek M.S."/>
            <person name="Miyasato S.R."/>
            <person name="Simison M."/>
            <person name="Cherry J.M."/>
        </authorList>
    </citation>
    <scope>GENOME REANNOTATION</scope>
    <source>
        <strain>ATCC 204508 / S288c</strain>
    </source>
</reference>
<reference key="4">
    <citation type="journal article" date="2007" name="J. Proteome Res.">
        <title>Large-scale phosphorylation analysis of alpha-factor-arrested Saccharomyces cerevisiae.</title>
        <authorList>
            <person name="Li X."/>
            <person name="Gerber S.A."/>
            <person name="Rudner A.D."/>
            <person name="Beausoleil S.A."/>
            <person name="Haas W."/>
            <person name="Villen J."/>
            <person name="Elias J.E."/>
            <person name="Gygi S.P."/>
        </authorList>
    </citation>
    <scope>PHOSPHORYLATION [LARGE SCALE ANALYSIS] AT THR-20; SER-67; SER-72; SER-84; THR-88; SER-100 AND SER-106</scope>
    <scope>IDENTIFICATION BY MASS SPECTROMETRY [LARGE SCALE ANALYSIS]</scope>
    <source>
        <strain>ADR376</strain>
    </source>
</reference>
<name>FUS2_YEAST</name>
<proteinExistence type="evidence at protein level"/>